<feature type="chain" id="PRO_0000220337" description="Iron-sulfur cluster repair protein ScdA">
    <location>
        <begin position="1"/>
        <end position="224"/>
    </location>
</feature>
<name>SCDA_STAAN</name>
<proteinExistence type="evidence at protein level"/>
<sequence>MINKNDIVADIVIDYPKAADIFRSVGIDFCCGGQVSIEAASLEKKNVDLNELLQRLNDVEQTNTPGSLNPKFLNVSSLIQYIQAAYHEPLREEFKNLTPYVTKLSKVHGPNHPYLVELKETYDTFKSGMLEHMQKEDDVDFPKLIKYEQGEVVNDINTVIDDLVSDHIATGQLLVKMSDLTSSYEPPIEACGTWRLVYQRLKALEVLTHEHVHLENHVLFKKVS</sequence>
<evidence type="ECO:0000255" key="1">
    <source>
        <dbReference type="HAMAP-Rule" id="MF_01156"/>
    </source>
</evidence>
<accession>Q7A7U6</accession>
<comment type="function">
    <text evidence="1">Di-iron-containing protein involved in the repair of iron-sulfur clusters damaged by oxidative and nitrosative stress conditions.</text>
</comment>
<comment type="subunit">
    <text evidence="1">Homodimer.</text>
</comment>
<comment type="subcellular location">
    <subcellularLocation>
        <location evidence="1">Cytoplasm</location>
    </subcellularLocation>
</comment>
<comment type="similarity">
    <text evidence="1">Belongs to the RIC family. ScdA subfamily.</text>
</comment>
<dbReference type="EMBL" id="BA000018">
    <property type="protein sequence ID" value="BAB41473.1"/>
    <property type="molecule type" value="Genomic_DNA"/>
</dbReference>
<dbReference type="PIR" id="F89789">
    <property type="entry name" value="F89789"/>
</dbReference>
<dbReference type="RefSeq" id="WP_000608818.1">
    <property type="nucleotide sequence ID" value="NC_002745.2"/>
</dbReference>
<dbReference type="SMR" id="Q7A7U6"/>
<dbReference type="EnsemblBacteria" id="BAB41473">
    <property type="protein sequence ID" value="BAB41473"/>
    <property type="gene ID" value="BAB41473"/>
</dbReference>
<dbReference type="KEGG" id="sau:SA0249"/>
<dbReference type="HOGENOM" id="CLU_076075_0_1_9"/>
<dbReference type="GO" id="GO:0005737">
    <property type="term" value="C:cytoplasm"/>
    <property type="evidence" value="ECO:0007669"/>
    <property type="project" value="UniProtKB-SubCell"/>
</dbReference>
<dbReference type="GO" id="GO:0046872">
    <property type="term" value="F:metal ion binding"/>
    <property type="evidence" value="ECO:0007669"/>
    <property type="project" value="UniProtKB-KW"/>
</dbReference>
<dbReference type="GO" id="GO:0030091">
    <property type="term" value="P:protein repair"/>
    <property type="evidence" value="ECO:0007669"/>
    <property type="project" value="UniProtKB-UniRule"/>
</dbReference>
<dbReference type="GO" id="GO:0051409">
    <property type="term" value="P:response to nitrosative stress"/>
    <property type="evidence" value="ECO:0007669"/>
    <property type="project" value="UniProtKB-UniRule"/>
</dbReference>
<dbReference type="GO" id="GO:0006979">
    <property type="term" value="P:response to oxidative stress"/>
    <property type="evidence" value="ECO:0007669"/>
    <property type="project" value="UniProtKB-UniRule"/>
</dbReference>
<dbReference type="FunFam" id="1.20.120.520:FF:000003">
    <property type="entry name" value="Iron-sulfur cluster repair protein ScdA"/>
    <property type="match status" value="1"/>
</dbReference>
<dbReference type="Gene3D" id="1.20.120.520">
    <property type="entry name" value="nmb1532 protein domain like"/>
    <property type="match status" value="1"/>
</dbReference>
<dbReference type="Gene3D" id="1.10.3910.10">
    <property type="entry name" value="SP0561-like"/>
    <property type="match status" value="1"/>
</dbReference>
<dbReference type="HAMAP" id="MF_01156">
    <property type="entry name" value="RIC_ScdA"/>
    <property type="match status" value="1"/>
</dbReference>
<dbReference type="InterPro" id="IPR012312">
    <property type="entry name" value="Hemerythrin-like"/>
</dbReference>
<dbReference type="InterPro" id="IPR019903">
    <property type="entry name" value="RIC_family"/>
</dbReference>
<dbReference type="InterPro" id="IPR023551">
    <property type="entry name" value="ScdA"/>
</dbReference>
<dbReference type="InterPro" id="IPR038062">
    <property type="entry name" value="ScdA-like_N_sf"/>
</dbReference>
<dbReference type="NCBIfam" id="TIGR03652">
    <property type="entry name" value="FeS_repair_RIC"/>
    <property type="match status" value="1"/>
</dbReference>
<dbReference type="NCBIfam" id="NF009777">
    <property type="entry name" value="PRK13276.1"/>
    <property type="match status" value="1"/>
</dbReference>
<dbReference type="PANTHER" id="PTHR36438">
    <property type="entry name" value="IRON-SULFUR CLUSTER REPAIR PROTEIN YTFE"/>
    <property type="match status" value="1"/>
</dbReference>
<dbReference type="PANTHER" id="PTHR36438:SF1">
    <property type="entry name" value="IRON-SULFUR CLUSTER REPAIR PROTEIN YTFE"/>
    <property type="match status" value="1"/>
</dbReference>
<dbReference type="Pfam" id="PF01814">
    <property type="entry name" value="Hemerythrin"/>
    <property type="match status" value="1"/>
</dbReference>
<dbReference type="Pfam" id="PF04405">
    <property type="entry name" value="ScdA_N"/>
    <property type="match status" value="1"/>
</dbReference>
<dbReference type="SUPFAM" id="SSF140683">
    <property type="entry name" value="SP0561-like"/>
    <property type="match status" value="1"/>
</dbReference>
<keyword id="KW-0963">Cytoplasm</keyword>
<keyword id="KW-0408">Iron</keyword>
<keyword id="KW-0479">Metal-binding</keyword>
<keyword id="KW-0346">Stress response</keyword>
<protein>
    <recommendedName>
        <fullName evidence="1">Iron-sulfur cluster repair protein ScdA</fullName>
    </recommendedName>
</protein>
<organism>
    <name type="scientific">Staphylococcus aureus (strain N315)</name>
    <dbReference type="NCBI Taxonomy" id="158879"/>
    <lineage>
        <taxon>Bacteria</taxon>
        <taxon>Bacillati</taxon>
        <taxon>Bacillota</taxon>
        <taxon>Bacilli</taxon>
        <taxon>Bacillales</taxon>
        <taxon>Staphylococcaceae</taxon>
        <taxon>Staphylococcus</taxon>
    </lineage>
</organism>
<reference key="1">
    <citation type="journal article" date="2001" name="Lancet">
        <title>Whole genome sequencing of meticillin-resistant Staphylococcus aureus.</title>
        <authorList>
            <person name="Kuroda M."/>
            <person name="Ohta T."/>
            <person name="Uchiyama I."/>
            <person name="Baba T."/>
            <person name="Yuzawa H."/>
            <person name="Kobayashi I."/>
            <person name="Cui L."/>
            <person name="Oguchi A."/>
            <person name="Aoki K."/>
            <person name="Nagai Y."/>
            <person name="Lian J.-Q."/>
            <person name="Ito T."/>
            <person name="Kanamori M."/>
            <person name="Matsumaru H."/>
            <person name="Maruyama A."/>
            <person name="Murakami H."/>
            <person name="Hosoyama A."/>
            <person name="Mizutani-Ui Y."/>
            <person name="Takahashi N.K."/>
            <person name="Sawano T."/>
            <person name="Inoue R."/>
            <person name="Kaito C."/>
            <person name="Sekimizu K."/>
            <person name="Hirakawa H."/>
            <person name="Kuhara S."/>
            <person name="Goto S."/>
            <person name="Yabuzaki J."/>
            <person name="Kanehisa M."/>
            <person name="Yamashita A."/>
            <person name="Oshima K."/>
            <person name="Furuya K."/>
            <person name="Yoshino C."/>
            <person name="Shiba T."/>
            <person name="Hattori M."/>
            <person name="Ogasawara N."/>
            <person name="Hayashi H."/>
            <person name="Hiramatsu K."/>
        </authorList>
    </citation>
    <scope>NUCLEOTIDE SEQUENCE [LARGE SCALE GENOMIC DNA]</scope>
    <source>
        <strain>N315</strain>
    </source>
</reference>
<reference key="2">
    <citation type="journal article" date="2005" name="J. Microbiol. Methods">
        <title>Correlation of proteomic and transcriptomic profiles of Staphylococcus aureus during the post-exponential phase of growth.</title>
        <authorList>
            <person name="Scherl A."/>
            <person name="Francois P."/>
            <person name="Bento M."/>
            <person name="Deshusses J.M."/>
            <person name="Charbonnier Y."/>
            <person name="Converset V."/>
            <person name="Huyghe A."/>
            <person name="Walter N."/>
            <person name="Hoogland C."/>
            <person name="Appel R.D."/>
            <person name="Sanchez J.-C."/>
            <person name="Zimmermann-Ivol C.G."/>
            <person name="Corthals G.L."/>
            <person name="Hochstrasser D.F."/>
            <person name="Schrenzel J."/>
        </authorList>
    </citation>
    <scope>IDENTIFICATION BY MASS SPECTROMETRY</scope>
    <source>
        <strain>N315</strain>
    </source>
</reference>
<reference key="3">
    <citation type="submission" date="2007-10" db="UniProtKB">
        <title>Shotgun proteomic analysis of total and membrane protein extracts of S. aureus strain N315.</title>
        <authorList>
            <person name="Vaezzadeh A.R."/>
            <person name="Deshusses J."/>
            <person name="Lescuyer P."/>
            <person name="Hochstrasser D.F."/>
        </authorList>
    </citation>
    <scope>IDENTIFICATION BY MASS SPECTROMETRY [LARGE SCALE ANALYSIS]</scope>
    <source>
        <strain>N315</strain>
    </source>
</reference>
<gene>
    <name evidence="1" type="primary">scdA</name>
    <name type="ordered locus">SA0249</name>
</gene>